<protein>
    <recommendedName>
        <fullName evidence="1">Oligoribonuclease</fullName>
        <ecNumber evidence="1">3.1.15.-</ecNumber>
    </recommendedName>
</protein>
<gene>
    <name evidence="1" type="primary">orn</name>
    <name type="ordered locus">MT2586</name>
</gene>
<comment type="function">
    <text evidence="1">3'-to-5' exoribonuclease specific for small oligoribonucleotides.</text>
</comment>
<comment type="subcellular location">
    <subcellularLocation>
        <location evidence="1">Cytoplasm</location>
    </subcellularLocation>
</comment>
<comment type="similarity">
    <text evidence="1">Belongs to the oligoribonuclease family.</text>
</comment>
<proteinExistence type="inferred from homology"/>
<name>ORN_MYCTO</name>
<accession>P9WIU0</accession>
<accession>L0T9U9</accession>
<accession>O06174</accession>
<accession>P65597</accession>
<reference key="1">
    <citation type="journal article" date="2002" name="J. Bacteriol.">
        <title>Whole-genome comparison of Mycobacterium tuberculosis clinical and laboratory strains.</title>
        <authorList>
            <person name="Fleischmann R.D."/>
            <person name="Alland D."/>
            <person name="Eisen J.A."/>
            <person name="Carpenter L."/>
            <person name="White O."/>
            <person name="Peterson J.D."/>
            <person name="DeBoy R.T."/>
            <person name="Dodson R.J."/>
            <person name="Gwinn M.L."/>
            <person name="Haft D.H."/>
            <person name="Hickey E.K."/>
            <person name="Kolonay J.F."/>
            <person name="Nelson W.C."/>
            <person name="Umayam L.A."/>
            <person name="Ermolaeva M.D."/>
            <person name="Salzberg S.L."/>
            <person name="Delcher A."/>
            <person name="Utterback T.R."/>
            <person name="Weidman J.F."/>
            <person name="Khouri H.M."/>
            <person name="Gill J."/>
            <person name="Mikula A."/>
            <person name="Bishai W."/>
            <person name="Jacobs W.R. Jr."/>
            <person name="Venter J.C."/>
            <person name="Fraser C.M."/>
        </authorList>
    </citation>
    <scope>NUCLEOTIDE SEQUENCE [LARGE SCALE GENOMIC DNA]</scope>
    <source>
        <strain>CDC 1551 / Oshkosh</strain>
    </source>
</reference>
<feature type="chain" id="PRO_0000427946" description="Oligoribonuclease">
    <location>
        <begin position="1"/>
        <end position="215"/>
    </location>
</feature>
<feature type="domain" description="Exonuclease" evidence="1">
    <location>
        <begin position="5"/>
        <end position="170"/>
    </location>
</feature>
<feature type="region of interest" description="Disordered" evidence="2">
    <location>
        <begin position="196"/>
        <end position="215"/>
    </location>
</feature>
<feature type="active site" evidence="1">
    <location>
        <position position="127"/>
    </location>
</feature>
<keyword id="KW-0963">Cytoplasm</keyword>
<keyword id="KW-0269">Exonuclease</keyword>
<keyword id="KW-0378">Hydrolase</keyword>
<keyword id="KW-0540">Nuclease</keyword>
<keyword id="KW-1185">Reference proteome</keyword>
<dbReference type="EC" id="3.1.15.-" evidence="1"/>
<dbReference type="EMBL" id="AE000516">
    <property type="protein sequence ID" value="AAK46890.1"/>
    <property type="molecule type" value="Genomic_DNA"/>
</dbReference>
<dbReference type="PIR" id="G70551">
    <property type="entry name" value="G70551"/>
</dbReference>
<dbReference type="RefSeq" id="WP_003899361.1">
    <property type="nucleotide sequence ID" value="NZ_KK341227.1"/>
</dbReference>
<dbReference type="SMR" id="P9WIU0"/>
<dbReference type="GeneID" id="45426505"/>
<dbReference type="KEGG" id="mtc:MT2586"/>
<dbReference type="PATRIC" id="fig|83331.31.peg.2788"/>
<dbReference type="HOGENOM" id="CLU_064761_3_0_11"/>
<dbReference type="Proteomes" id="UP000001020">
    <property type="component" value="Chromosome"/>
</dbReference>
<dbReference type="GO" id="GO:0005737">
    <property type="term" value="C:cytoplasm"/>
    <property type="evidence" value="ECO:0007669"/>
    <property type="project" value="UniProtKB-SubCell"/>
</dbReference>
<dbReference type="GO" id="GO:0000175">
    <property type="term" value="F:3'-5'-RNA exonuclease activity"/>
    <property type="evidence" value="ECO:0007669"/>
    <property type="project" value="InterPro"/>
</dbReference>
<dbReference type="GO" id="GO:0003676">
    <property type="term" value="F:nucleic acid binding"/>
    <property type="evidence" value="ECO:0007669"/>
    <property type="project" value="InterPro"/>
</dbReference>
<dbReference type="CDD" id="cd06135">
    <property type="entry name" value="Orn"/>
    <property type="match status" value="1"/>
</dbReference>
<dbReference type="FunFam" id="3.30.420.10:FF:000003">
    <property type="entry name" value="Oligoribonuclease"/>
    <property type="match status" value="1"/>
</dbReference>
<dbReference type="Gene3D" id="3.30.420.10">
    <property type="entry name" value="Ribonuclease H-like superfamily/Ribonuclease H"/>
    <property type="match status" value="1"/>
</dbReference>
<dbReference type="HAMAP" id="MF_00045">
    <property type="entry name" value="Oligoribonuclease"/>
    <property type="match status" value="1"/>
</dbReference>
<dbReference type="InterPro" id="IPR013520">
    <property type="entry name" value="Exonuclease_RNaseT/DNA_pol3"/>
</dbReference>
<dbReference type="InterPro" id="IPR022894">
    <property type="entry name" value="Oligoribonuclease"/>
</dbReference>
<dbReference type="InterPro" id="IPR012337">
    <property type="entry name" value="RNaseH-like_sf"/>
</dbReference>
<dbReference type="InterPro" id="IPR036397">
    <property type="entry name" value="RNaseH_sf"/>
</dbReference>
<dbReference type="NCBIfam" id="NF003765">
    <property type="entry name" value="PRK05359.1"/>
    <property type="match status" value="1"/>
</dbReference>
<dbReference type="PANTHER" id="PTHR11046">
    <property type="entry name" value="OLIGORIBONUCLEASE, MITOCHONDRIAL"/>
    <property type="match status" value="1"/>
</dbReference>
<dbReference type="PANTHER" id="PTHR11046:SF0">
    <property type="entry name" value="OLIGORIBONUCLEASE, MITOCHONDRIAL"/>
    <property type="match status" value="1"/>
</dbReference>
<dbReference type="Pfam" id="PF00929">
    <property type="entry name" value="RNase_T"/>
    <property type="match status" value="1"/>
</dbReference>
<dbReference type="SMART" id="SM00479">
    <property type="entry name" value="EXOIII"/>
    <property type="match status" value="1"/>
</dbReference>
<dbReference type="SUPFAM" id="SSF53098">
    <property type="entry name" value="Ribonuclease H-like"/>
    <property type="match status" value="1"/>
</dbReference>
<sequence>MQDELVWIDCEMTGLDLGSDKLIEIAALVTDADLNILGDGVDVVMHADDAALSGMIDVVAEMHSRSGLIDEVKASTVDLATAEAMVLDYINEHVKQPKTAPLAGNSIATDRAFIARDMPTLDSFLHYRMIDVSSIKELCRRWYPRIYFGQPPKGLTHRALADIHESIRELRFYRRTAFVPQPGPSTSEIAAVVAELSDGAGAQEETDSAEAPQSG</sequence>
<evidence type="ECO:0000255" key="1">
    <source>
        <dbReference type="HAMAP-Rule" id="MF_00045"/>
    </source>
</evidence>
<evidence type="ECO:0000256" key="2">
    <source>
        <dbReference type="SAM" id="MobiDB-lite"/>
    </source>
</evidence>
<organism>
    <name type="scientific">Mycobacterium tuberculosis (strain CDC 1551 / Oshkosh)</name>
    <dbReference type="NCBI Taxonomy" id="83331"/>
    <lineage>
        <taxon>Bacteria</taxon>
        <taxon>Bacillati</taxon>
        <taxon>Actinomycetota</taxon>
        <taxon>Actinomycetes</taxon>
        <taxon>Mycobacteriales</taxon>
        <taxon>Mycobacteriaceae</taxon>
        <taxon>Mycobacterium</taxon>
        <taxon>Mycobacterium tuberculosis complex</taxon>
    </lineage>
</organism>